<gene>
    <name type="primary">Slc23a1</name>
    <name type="synonym">Svct1</name>
    <name type="synonym">Yspl3</name>
</gene>
<reference key="1">
    <citation type="journal article" date="1998" name="Biochim. Biophys. Acta">
        <title>Molecular characterization of two novel transporters from human and mouse kidney and from LLC-PK1 cells reveals a novel conserved family that is homologous to bacterial and Aspergillus nucleobase transporters.</title>
        <authorList>
            <person name="Faaland C.A."/>
            <person name="Race J.E."/>
            <person name="Ricken G."/>
            <person name="Warner F.J."/>
            <person name="Williams W.J."/>
            <person name="Holtzman E.J."/>
        </authorList>
    </citation>
    <scope>NUCLEOTIDE SEQUENCE [MRNA]</scope>
    <source>
        <strain>BALB/cJ</strain>
        <tissue>Brain</tissue>
    </source>
</reference>
<reference key="2">
    <citation type="journal article" date="2005" name="Science">
        <title>The transcriptional landscape of the mammalian genome.</title>
        <authorList>
            <person name="Carninci P."/>
            <person name="Kasukawa T."/>
            <person name="Katayama S."/>
            <person name="Gough J."/>
            <person name="Frith M.C."/>
            <person name="Maeda N."/>
            <person name="Oyama R."/>
            <person name="Ravasi T."/>
            <person name="Lenhard B."/>
            <person name="Wells C."/>
            <person name="Kodzius R."/>
            <person name="Shimokawa K."/>
            <person name="Bajic V.B."/>
            <person name="Brenner S.E."/>
            <person name="Batalov S."/>
            <person name="Forrest A.R."/>
            <person name="Zavolan M."/>
            <person name="Davis M.J."/>
            <person name="Wilming L.G."/>
            <person name="Aidinis V."/>
            <person name="Allen J.E."/>
            <person name="Ambesi-Impiombato A."/>
            <person name="Apweiler R."/>
            <person name="Aturaliya R.N."/>
            <person name="Bailey T.L."/>
            <person name="Bansal M."/>
            <person name="Baxter L."/>
            <person name="Beisel K.W."/>
            <person name="Bersano T."/>
            <person name="Bono H."/>
            <person name="Chalk A.M."/>
            <person name="Chiu K.P."/>
            <person name="Choudhary V."/>
            <person name="Christoffels A."/>
            <person name="Clutterbuck D.R."/>
            <person name="Crowe M.L."/>
            <person name="Dalla E."/>
            <person name="Dalrymple B.P."/>
            <person name="de Bono B."/>
            <person name="Della Gatta G."/>
            <person name="di Bernardo D."/>
            <person name="Down T."/>
            <person name="Engstrom P."/>
            <person name="Fagiolini M."/>
            <person name="Faulkner G."/>
            <person name="Fletcher C.F."/>
            <person name="Fukushima T."/>
            <person name="Furuno M."/>
            <person name="Futaki S."/>
            <person name="Gariboldi M."/>
            <person name="Georgii-Hemming P."/>
            <person name="Gingeras T.R."/>
            <person name="Gojobori T."/>
            <person name="Green R.E."/>
            <person name="Gustincich S."/>
            <person name="Harbers M."/>
            <person name="Hayashi Y."/>
            <person name="Hensch T.K."/>
            <person name="Hirokawa N."/>
            <person name="Hill D."/>
            <person name="Huminiecki L."/>
            <person name="Iacono M."/>
            <person name="Ikeo K."/>
            <person name="Iwama A."/>
            <person name="Ishikawa T."/>
            <person name="Jakt M."/>
            <person name="Kanapin A."/>
            <person name="Katoh M."/>
            <person name="Kawasawa Y."/>
            <person name="Kelso J."/>
            <person name="Kitamura H."/>
            <person name="Kitano H."/>
            <person name="Kollias G."/>
            <person name="Krishnan S.P."/>
            <person name="Kruger A."/>
            <person name="Kummerfeld S.K."/>
            <person name="Kurochkin I.V."/>
            <person name="Lareau L.F."/>
            <person name="Lazarevic D."/>
            <person name="Lipovich L."/>
            <person name="Liu J."/>
            <person name="Liuni S."/>
            <person name="McWilliam S."/>
            <person name="Madan Babu M."/>
            <person name="Madera M."/>
            <person name="Marchionni L."/>
            <person name="Matsuda H."/>
            <person name="Matsuzawa S."/>
            <person name="Miki H."/>
            <person name="Mignone F."/>
            <person name="Miyake S."/>
            <person name="Morris K."/>
            <person name="Mottagui-Tabar S."/>
            <person name="Mulder N."/>
            <person name="Nakano N."/>
            <person name="Nakauchi H."/>
            <person name="Ng P."/>
            <person name="Nilsson R."/>
            <person name="Nishiguchi S."/>
            <person name="Nishikawa S."/>
            <person name="Nori F."/>
            <person name="Ohara O."/>
            <person name="Okazaki Y."/>
            <person name="Orlando V."/>
            <person name="Pang K.C."/>
            <person name="Pavan W.J."/>
            <person name="Pavesi G."/>
            <person name="Pesole G."/>
            <person name="Petrovsky N."/>
            <person name="Piazza S."/>
            <person name="Reed J."/>
            <person name="Reid J.F."/>
            <person name="Ring B.Z."/>
            <person name="Ringwald M."/>
            <person name="Rost B."/>
            <person name="Ruan Y."/>
            <person name="Salzberg S.L."/>
            <person name="Sandelin A."/>
            <person name="Schneider C."/>
            <person name="Schoenbach C."/>
            <person name="Sekiguchi K."/>
            <person name="Semple C.A."/>
            <person name="Seno S."/>
            <person name="Sessa L."/>
            <person name="Sheng Y."/>
            <person name="Shibata Y."/>
            <person name="Shimada H."/>
            <person name="Shimada K."/>
            <person name="Silva D."/>
            <person name="Sinclair B."/>
            <person name="Sperling S."/>
            <person name="Stupka E."/>
            <person name="Sugiura K."/>
            <person name="Sultana R."/>
            <person name="Takenaka Y."/>
            <person name="Taki K."/>
            <person name="Tammoja K."/>
            <person name="Tan S.L."/>
            <person name="Tang S."/>
            <person name="Taylor M.S."/>
            <person name="Tegner J."/>
            <person name="Teichmann S.A."/>
            <person name="Ueda H.R."/>
            <person name="van Nimwegen E."/>
            <person name="Verardo R."/>
            <person name="Wei C.L."/>
            <person name="Yagi K."/>
            <person name="Yamanishi H."/>
            <person name="Zabarovsky E."/>
            <person name="Zhu S."/>
            <person name="Zimmer A."/>
            <person name="Hide W."/>
            <person name="Bult C."/>
            <person name="Grimmond S.M."/>
            <person name="Teasdale R.D."/>
            <person name="Liu E.T."/>
            <person name="Brusic V."/>
            <person name="Quackenbush J."/>
            <person name="Wahlestedt C."/>
            <person name="Mattick J.S."/>
            <person name="Hume D.A."/>
            <person name="Kai C."/>
            <person name="Sasaki D."/>
            <person name="Tomaru Y."/>
            <person name="Fukuda S."/>
            <person name="Kanamori-Katayama M."/>
            <person name="Suzuki M."/>
            <person name="Aoki J."/>
            <person name="Arakawa T."/>
            <person name="Iida J."/>
            <person name="Imamura K."/>
            <person name="Itoh M."/>
            <person name="Kato T."/>
            <person name="Kawaji H."/>
            <person name="Kawagashira N."/>
            <person name="Kawashima T."/>
            <person name="Kojima M."/>
            <person name="Kondo S."/>
            <person name="Konno H."/>
            <person name="Nakano K."/>
            <person name="Ninomiya N."/>
            <person name="Nishio T."/>
            <person name="Okada M."/>
            <person name="Plessy C."/>
            <person name="Shibata K."/>
            <person name="Shiraki T."/>
            <person name="Suzuki S."/>
            <person name="Tagami M."/>
            <person name="Waki K."/>
            <person name="Watahiki A."/>
            <person name="Okamura-Oho Y."/>
            <person name="Suzuki H."/>
            <person name="Kawai J."/>
            <person name="Hayashizaki Y."/>
        </authorList>
    </citation>
    <scope>NUCLEOTIDE SEQUENCE [LARGE SCALE MRNA]</scope>
    <source>
        <strain>C57BL/6J</strain>
        <tissue>Kidney</tissue>
    </source>
</reference>
<reference key="3">
    <citation type="journal article" date="2004" name="Genome Res.">
        <title>The status, quality, and expansion of the NIH full-length cDNA project: the Mammalian Gene Collection (MGC).</title>
        <authorList>
            <consortium name="The MGC Project Team"/>
        </authorList>
    </citation>
    <scope>NUCLEOTIDE SEQUENCE [LARGE SCALE MRNA]</scope>
    <source>
        <tissue>Kidney</tissue>
    </source>
</reference>
<reference key="4">
    <citation type="journal article" date="2007" name="Proc. Natl. Acad. Sci. U.S.A.">
        <title>Large-scale phosphorylation analysis of mouse liver.</title>
        <authorList>
            <person name="Villen J."/>
            <person name="Beausoleil S.A."/>
            <person name="Gerber S.A."/>
            <person name="Gygi S.P."/>
        </authorList>
    </citation>
    <scope>PHOSPHORYLATION [LARGE SCALE ANALYSIS] AT THR-603</scope>
    <scope>IDENTIFICATION BY MASS SPECTROMETRY [LARGE SCALE ANALYSIS]</scope>
    <source>
        <tissue>Liver</tissue>
    </source>
</reference>
<reference key="5">
    <citation type="journal article" date="2010" name="Cell">
        <title>A tissue-specific atlas of mouse protein phosphorylation and expression.</title>
        <authorList>
            <person name="Huttlin E.L."/>
            <person name="Jedrychowski M.P."/>
            <person name="Elias J.E."/>
            <person name="Goswami T."/>
            <person name="Rad R."/>
            <person name="Beausoleil S.A."/>
            <person name="Villen J."/>
            <person name="Haas W."/>
            <person name="Sowa M.E."/>
            <person name="Gygi S.P."/>
        </authorList>
    </citation>
    <scope>PHOSPHORYLATION [LARGE SCALE ANALYSIS] AT THR-598; SER-600 AND THR-603</scope>
    <scope>IDENTIFICATION BY MASS SPECTROMETRY [LARGE SCALE ANALYSIS]</scope>
    <source>
        <tissue>Kidney</tissue>
        <tissue>Liver</tissue>
    </source>
</reference>
<reference key="6">
    <citation type="journal article" date="2023" name="Pflugers Arch.">
        <title>Vitamin C transporter SVCT1 serves a physiological role as a urate importer: functional analyses and in vivo investigations.</title>
        <authorList>
            <person name="Toyoda Y."/>
            <person name="Miyata H."/>
            <person name="Uchida N."/>
            <person name="Morimoto K."/>
            <person name="Shigesawa R."/>
            <person name="Kassai H."/>
            <person name="Nakao K."/>
            <person name="Tomioka N.H."/>
            <person name="Matsuo H."/>
            <person name="Ichida K."/>
            <person name="Hosoyamada M."/>
            <person name="Aiba A."/>
            <person name="Suzuki H."/>
            <person name="Takada T."/>
        </authorList>
    </citation>
    <scope>FUNCTION</scope>
    <scope>TRANSPORTER ACTIVITY</scope>
    <scope>BIOPHYSICOCHEMICAL PROPERTIES</scope>
    <scope>SUBCELLULAR LOCATION</scope>
    <scope>TISSUE SPECIFICITY</scope>
</reference>
<proteinExistence type="evidence at protein level"/>
<evidence type="ECO:0000250" key="1">
    <source>
        <dbReference type="UniProtKB" id="Q9UHI7"/>
    </source>
</evidence>
<evidence type="ECO:0000255" key="2"/>
<evidence type="ECO:0000256" key="3">
    <source>
        <dbReference type="SAM" id="MobiDB-lite"/>
    </source>
</evidence>
<evidence type="ECO:0000269" key="4">
    <source>
    </source>
</evidence>
<evidence type="ECO:0000305" key="5"/>
<evidence type="ECO:0000305" key="6">
    <source>
    </source>
</evidence>
<evidence type="ECO:0007744" key="7">
    <source>
    </source>
</evidence>
<evidence type="ECO:0007744" key="8">
    <source>
    </source>
</evidence>
<evidence type="ECO:0007829" key="9">
    <source>
        <dbReference type="PDB" id="7YTW"/>
    </source>
</evidence>
<evidence type="ECO:0007829" key="10">
    <source>
        <dbReference type="PDB" id="7YTY"/>
    </source>
</evidence>
<comment type="function">
    <text evidence="1 4">Sodium:L-ascorbate cotransporter. Mediates electrogenic uptake of vitamin C, with a stoichiometry of 2 Na(+) for each L-ascorbate (PubMed:36749388). Has retained some ancestral activity toward nucleobases such as urate, an oxidized purine. Low-affinity high-capacity sodium:urate cotransporter, may regulate serum urate levels by serving as a renal urate re-absorber (By similarity) (PubMed:36749388).</text>
</comment>
<comment type="catalytic activity">
    <reaction evidence="4">
        <text>L-ascorbate(out) + 2 Na(+)(out) = L-ascorbate(in) + 2 Na(+)(in)</text>
        <dbReference type="Rhea" id="RHEA:69883"/>
        <dbReference type="ChEBI" id="CHEBI:29101"/>
        <dbReference type="ChEBI" id="CHEBI:38290"/>
    </reaction>
    <physiologicalReaction direction="left-to-right" evidence="6">
        <dbReference type="Rhea" id="RHEA:69884"/>
    </physiologicalReaction>
</comment>
<comment type="catalytic activity">
    <reaction evidence="4">
        <text>urate(out) + 2 Na(+)(out) = urate(in) + 2 Na(+)(in)</text>
        <dbReference type="Rhea" id="RHEA:76339"/>
        <dbReference type="ChEBI" id="CHEBI:17775"/>
        <dbReference type="ChEBI" id="CHEBI:29101"/>
    </reaction>
    <physiologicalReaction direction="left-to-right" evidence="6">
        <dbReference type="Rhea" id="RHEA:76340"/>
    </physiologicalReaction>
</comment>
<comment type="biophysicochemical properties">
    <kinetics>
        <KM evidence="4">646 uM for urate</KM>
        <Vmax evidence="4">430.1 pmol/min/mg enzyme toward urate</Vmax>
    </kinetics>
</comment>
<comment type="subcellular location">
    <subcellularLocation>
        <location evidence="4">Cell membrane</location>
        <topology evidence="1">Multi-pass membrane protein</topology>
    </subcellularLocation>
</comment>
<comment type="tissue specificity">
    <text evidence="4">Expressed in kidney (at protein level).</text>
</comment>
<comment type="PTM">
    <text evidence="1">Phosphorylated.</text>
</comment>
<comment type="similarity">
    <text evidence="5">Belongs to the nucleobase:cation symporter-2 (NCS2) (TC 2.A.40) family.</text>
</comment>
<dbReference type="EMBL" id="AF058318">
    <property type="protein sequence ID" value="AAC78805.1"/>
    <property type="molecule type" value="mRNA"/>
</dbReference>
<dbReference type="EMBL" id="AK085499">
    <property type="protein sequence ID" value="BAC39457.1"/>
    <property type="molecule type" value="mRNA"/>
</dbReference>
<dbReference type="EMBL" id="AK143959">
    <property type="protein sequence ID" value="BAE25631.1"/>
    <property type="molecule type" value="mRNA"/>
</dbReference>
<dbReference type="EMBL" id="AK165439">
    <property type="protein sequence ID" value="BAE38187.1"/>
    <property type="molecule type" value="mRNA"/>
</dbReference>
<dbReference type="EMBL" id="BC013528">
    <property type="protein sequence ID" value="AAH13528.1"/>
    <property type="molecule type" value="mRNA"/>
</dbReference>
<dbReference type="CCDS" id="CCDS29144.1"/>
<dbReference type="RefSeq" id="NP_035527.3">
    <property type="nucleotide sequence ID" value="NM_011397.4"/>
</dbReference>
<dbReference type="RefSeq" id="XP_017173340.1">
    <property type="nucleotide sequence ID" value="XM_017317851.1"/>
</dbReference>
<dbReference type="PDB" id="7YTW">
    <property type="method" value="EM"/>
    <property type="resolution" value="3.20 A"/>
    <property type="chains" value="A/B=1-605"/>
</dbReference>
<dbReference type="PDB" id="7YTY">
    <property type="method" value="EM"/>
    <property type="resolution" value="3.50 A"/>
    <property type="chains" value="A/B=1-605"/>
</dbReference>
<dbReference type="PDBsum" id="7YTW"/>
<dbReference type="PDBsum" id="7YTY"/>
<dbReference type="EMDB" id="EMD-34094"/>
<dbReference type="EMDB" id="EMD-34095"/>
<dbReference type="SMR" id="Q9Z2J0"/>
<dbReference type="FunCoup" id="Q9Z2J0">
    <property type="interactions" value="97"/>
</dbReference>
<dbReference type="STRING" id="10090.ENSMUSP00000025212"/>
<dbReference type="GlyCosmos" id="Q9Z2J0">
    <property type="glycosylation" value="2 sites, No reported glycans"/>
</dbReference>
<dbReference type="GlyGen" id="Q9Z2J0">
    <property type="glycosylation" value="3 sites"/>
</dbReference>
<dbReference type="iPTMnet" id="Q9Z2J0"/>
<dbReference type="PhosphoSitePlus" id="Q9Z2J0"/>
<dbReference type="SwissPalm" id="Q9Z2J0"/>
<dbReference type="jPOST" id="Q9Z2J0"/>
<dbReference type="PaxDb" id="10090-ENSMUSP00000025212"/>
<dbReference type="ProteomicsDB" id="253365"/>
<dbReference type="Antibodypedia" id="26736">
    <property type="antibodies" value="100 antibodies from 16 providers"/>
</dbReference>
<dbReference type="DNASU" id="20522"/>
<dbReference type="Ensembl" id="ENSMUST00000025212.8">
    <property type="protein sequence ID" value="ENSMUSP00000025212.6"/>
    <property type="gene ID" value="ENSMUSG00000024354.14"/>
</dbReference>
<dbReference type="GeneID" id="20522"/>
<dbReference type="KEGG" id="mmu:20522"/>
<dbReference type="UCSC" id="uc008eml.2">
    <property type="organism name" value="mouse"/>
</dbReference>
<dbReference type="AGR" id="MGI:1341903"/>
<dbReference type="CTD" id="9963"/>
<dbReference type="MGI" id="MGI:1341903">
    <property type="gene designation" value="Slc23a1"/>
</dbReference>
<dbReference type="VEuPathDB" id="HostDB:ENSMUSG00000024354"/>
<dbReference type="eggNOG" id="KOG1292">
    <property type="taxonomic scope" value="Eukaryota"/>
</dbReference>
<dbReference type="GeneTree" id="ENSGT00950000182953"/>
<dbReference type="HOGENOM" id="CLU_017959_5_4_1"/>
<dbReference type="InParanoid" id="Q9Z2J0"/>
<dbReference type="OMA" id="FRNIMIV"/>
<dbReference type="OrthoDB" id="1641903at2759"/>
<dbReference type="PhylomeDB" id="Q9Z2J0"/>
<dbReference type="TreeFam" id="TF313272"/>
<dbReference type="Reactome" id="R-MMU-196836">
    <property type="pathway name" value="Vitamin C (ascorbate) metabolism"/>
</dbReference>
<dbReference type="BioGRID-ORCS" id="20522">
    <property type="hits" value="2 hits in 76 CRISPR screens"/>
</dbReference>
<dbReference type="ChiTaRS" id="Slc23a1">
    <property type="organism name" value="mouse"/>
</dbReference>
<dbReference type="PRO" id="PR:Q9Z2J0"/>
<dbReference type="Proteomes" id="UP000000589">
    <property type="component" value="Chromosome 18"/>
</dbReference>
<dbReference type="RNAct" id="Q9Z2J0">
    <property type="molecule type" value="protein"/>
</dbReference>
<dbReference type="Bgee" id="ENSMUSG00000024354">
    <property type="expression patterns" value="Expressed in proximal tubule and 101 other cell types or tissues"/>
</dbReference>
<dbReference type="ExpressionAtlas" id="Q9Z2J0">
    <property type="expression patterns" value="baseline and differential"/>
</dbReference>
<dbReference type="GO" id="GO:0016324">
    <property type="term" value="C:apical plasma membrane"/>
    <property type="evidence" value="ECO:0000250"/>
    <property type="project" value="UniProtKB"/>
</dbReference>
<dbReference type="GO" id="GO:0009925">
    <property type="term" value="C:basal plasma membrane"/>
    <property type="evidence" value="ECO:0000314"/>
    <property type="project" value="UniProtKB"/>
</dbReference>
<dbReference type="GO" id="GO:0005737">
    <property type="term" value="C:cytoplasm"/>
    <property type="evidence" value="ECO:0000314"/>
    <property type="project" value="UniProtKB"/>
</dbReference>
<dbReference type="GO" id="GO:0043229">
    <property type="term" value="C:intracellular organelle"/>
    <property type="evidence" value="ECO:0000250"/>
    <property type="project" value="UniProtKB"/>
</dbReference>
<dbReference type="GO" id="GO:0005886">
    <property type="term" value="C:plasma membrane"/>
    <property type="evidence" value="ECO:0000314"/>
    <property type="project" value="UniProtKB"/>
</dbReference>
<dbReference type="GO" id="GO:0033300">
    <property type="term" value="F:dehydroascorbic acid transmembrane transporter activity"/>
    <property type="evidence" value="ECO:0000250"/>
    <property type="project" value="UniProtKB"/>
</dbReference>
<dbReference type="GO" id="GO:0008520">
    <property type="term" value="F:L-ascorbate:sodium symporter activity"/>
    <property type="evidence" value="ECO:0000314"/>
    <property type="project" value="UniProtKB"/>
</dbReference>
<dbReference type="GO" id="GO:0015229">
    <property type="term" value="F:L-ascorbic acid transmembrane transporter activity"/>
    <property type="evidence" value="ECO:0000314"/>
    <property type="project" value="UniProtKB"/>
</dbReference>
<dbReference type="GO" id="GO:0015081">
    <property type="term" value="F:sodium ion transmembrane transporter activity"/>
    <property type="evidence" value="ECO:0000250"/>
    <property type="project" value="UniProtKB"/>
</dbReference>
<dbReference type="GO" id="GO:0015143">
    <property type="term" value="F:urate transmembrane transporter activity"/>
    <property type="evidence" value="ECO:0000314"/>
    <property type="project" value="UniProtKB"/>
</dbReference>
<dbReference type="GO" id="GO:0007420">
    <property type="term" value="P:brain development"/>
    <property type="evidence" value="ECO:0000315"/>
    <property type="project" value="UniProtKB"/>
</dbReference>
<dbReference type="GO" id="GO:0070837">
    <property type="term" value="P:dehydroascorbic acid transport"/>
    <property type="evidence" value="ECO:0000250"/>
    <property type="project" value="UniProtKB"/>
</dbReference>
<dbReference type="GO" id="GO:0015882">
    <property type="term" value="P:L-ascorbic acid transmembrane transport"/>
    <property type="evidence" value="ECO:0000314"/>
    <property type="project" value="UniProtKB"/>
</dbReference>
<dbReference type="GO" id="GO:0030324">
    <property type="term" value="P:lung development"/>
    <property type="evidence" value="ECO:0000315"/>
    <property type="project" value="UniProtKB"/>
</dbReference>
<dbReference type="GO" id="GO:0009636">
    <property type="term" value="P:response to toxic substance"/>
    <property type="evidence" value="ECO:0000250"/>
    <property type="project" value="UniProtKB"/>
</dbReference>
<dbReference type="GO" id="GO:0006814">
    <property type="term" value="P:sodium ion transport"/>
    <property type="evidence" value="ECO:0000250"/>
    <property type="project" value="UniProtKB"/>
</dbReference>
<dbReference type="InterPro" id="IPR006043">
    <property type="entry name" value="NCS2"/>
</dbReference>
<dbReference type="PANTHER" id="PTHR11119">
    <property type="entry name" value="XANTHINE-URACIL / VITAMIN C PERMEASE FAMILY MEMBER"/>
    <property type="match status" value="1"/>
</dbReference>
<dbReference type="Pfam" id="PF00860">
    <property type="entry name" value="Xan_ur_permease"/>
    <property type="match status" value="1"/>
</dbReference>
<accession>Q9Z2J0</accession>
<accession>Q3TNA2</accession>
<accession>Q8C3M2</accession>
<accession>Q91WR7</accession>
<sequence length="605" mass="65554">MKTPEDPGSPKQHEVVDSAGTSTRDRQAPLPTEPKFDMLYKIEDVPPWYLCILLGFQHYLTCFSGTIAVPFLLAEALCVGRDQHMVSQLIGTIFTCVGITTLIQTTVGIRLPLFQASAFAFLVPAKSILALERWKCPSEEEIYGNWSMPLNTSHIWHPRIREVQGAIMVSSMVEVVIGLMGLPGALLSYIGPLTVTPTVSLIGLSVFQAAGDRAGSHWGISACSILLIVLFSQYLRNLTFLLPVYRWGKGLTLFRVQIFKMFPIVLAIMTVWLLCYVLTLTDVLPADPTVYGFQARTDARGDIMAISPWIRIPYPCQWGLPTVTVAAVLGMFSATLAGIIESIGDYYACARLAGAPPPPVHAINRGIFTEGICCIIAGLLGTGNGSTSSSPNIGVLGITKVGSRRVVQYGAGIMLILGAIGKFTALFASLPDPILGGMFCTLFGMITAVGLSNLQFVDMNSSRNLFVLGFSMFFGLTLPNYLDSNPGAINTGIPEVDQILTVLLTTEMFVGGCLAFILDNTVPGSPEERGLIQWKAGAHANSETSASLKSYDFPFGMGMVKRTTFFRYIPICPVFRGFSKKTQNQPPVLEDTPDNIETGSVCTKV</sequence>
<protein>
    <recommendedName>
        <fullName>Solute carrier family 23 member 1</fullName>
    </recommendedName>
    <alternativeName>
        <fullName>Na(+)/L-ascorbic acid transporter 1</fullName>
    </alternativeName>
    <alternativeName>
        <fullName>Sodium-dependent vitamin C transporter 1</fullName>
    </alternativeName>
    <alternativeName>
        <fullName>Yolk sac permease-like molecule 3</fullName>
    </alternativeName>
</protein>
<feature type="chain" id="PRO_0000165976" description="Solute carrier family 23 member 1">
    <location>
        <begin position="1"/>
        <end position="605"/>
    </location>
</feature>
<feature type="topological domain" description="Cytoplasmic" evidence="2">
    <location>
        <begin position="1"/>
        <end position="59"/>
    </location>
</feature>
<feature type="transmembrane region" description="Helical" evidence="2">
    <location>
        <begin position="60"/>
        <end position="80"/>
    </location>
</feature>
<feature type="topological domain" description="Extracellular" evidence="2">
    <location>
        <begin position="81"/>
        <end position="88"/>
    </location>
</feature>
<feature type="transmembrane region" description="Helical" evidence="2">
    <location>
        <begin position="89"/>
        <end position="109"/>
    </location>
</feature>
<feature type="topological domain" description="Cytoplasmic" evidence="2">
    <location>
        <position position="110"/>
    </location>
</feature>
<feature type="transmembrane region" description="Helical" evidence="2">
    <location>
        <begin position="111"/>
        <end position="131"/>
    </location>
</feature>
<feature type="topological domain" description="Extracellular" evidence="2">
    <location>
        <begin position="132"/>
        <end position="166"/>
    </location>
</feature>
<feature type="transmembrane region" description="Helical" evidence="2">
    <location>
        <begin position="167"/>
        <end position="187"/>
    </location>
</feature>
<feature type="topological domain" description="Cytoplasmic" evidence="2">
    <location>
        <begin position="188"/>
        <end position="214"/>
    </location>
</feature>
<feature type="transmembrane region" description="Helical" evidence="2">
    <location>
        <begin position="215"/>
        <end position="232"/>
    </location>
</feature>
<feature type="topological domain" description="Extracellular" evidence="2">
    <location>
        <begin position="233"/>
        <end position="236"/>
    </location>
</feature>
<feature type="intramembrane region" description="Helical" evidence="2">
    <location>
        <begin position="237"/>
        <end position="250"/>
    </location>
</feature>
<feature type="topological domain" description="Extracellular" evidence="2">
    <location>
        <begin position="251"/>
        <end position="257"/>
    </location>
</feature>
<feature type="transmembrane region" description="Helical" evidence="2">
    <location>
        <begin position="258"/>
        <end position="278"/>
    </location>
</feature>
<feature type="topological domain" description="Cytoplasmic" evidence="2">
    <location>
        <begin position="279"/>
        <end position="319"/>
    </location>
</feature>
<feature type="transmembrane region" description="Helical" evidence="2">
    <location>
        <begin position="320"/>
        <end position="340"/>
    </location>
</feature>
<feature type="topological domain" description="Extracellular" evidence="2">
    <location>
        <begin position="341"/>
        <end position="365"/>
    </location>
</feature>
<feature type="transmembrane region" description="Helical" evidence="2">
    <location>
        <begin position="366"/>
        <end position="386"/>
    </location>
</feature>
<feature type="topological domain" description="Cytoplasmic" evidence="2">
    <location>
        <begin position="387"/>
        <end position="409"/>
    </location>
</feature>
<feature type="transmembrane region" description="Helical" evidence="2">
    <location>
        <begin position="410"/>
        <end position="430"/>
    </location>
</feature>
<feature type="topological domain" description="Extracellular" evidence="2">
    <location>
        <begin position="431"/>
        <end position="433"/>
    </location>
</feature>
<feature type="transmembrane region" description="Helical" evidence="2">
    <location>
        <begin position="434"/>
        <end position="454"/>
    </location>
</feature>
<feature type="topological domain" description="Cytoplasmic" evidence="2">
    <location>
        <begin position="455"/>
        <end position="464"/>
    </location>
</feature>
<feature type="transmembrane region" description="Helical" evidence="2">
    <location>
        <begin position="465"/>
        <end position="485"/>
    </location>
</feature>
<feature type="topological domain" description="Extracellular" evidence="2">
    <location>
        <begin position="486"/>
        <end position="497"/>
    </location>
</feature>
<feature type="transmembrane region" description="Helical" evidence="2">
    <location>
        <begin position="498"/>
        <end position="518"/>
    </location>
</feature>
<feature type="topological domain" description="Cytoplasmic" evidence="2">
    <location>
        <begin position="519"/>
        <end position="605"/>
    </location>
</feature>
<feature type="region of interest" description="Disordered" evidence="3">
    <location>
        <begin position="1"/>
        <end position="30"/>
    </location>
</feature>
<feature type="modified residue" description="Phosphothreonine" evidence="8">
    <location>
        <position position="598"/>
    </location>
</feature>
<feature type="modified residue" description="Phosphoserine" evidence="8">
    <location>
        <position position="600"/>
    </location>
</feature>
<feature type="modified residue" description="Phosphothreonine" evidence="7 8">
    <location>
        <position position="603"/>
    </location>
</feature>
<feature type="glycosylation site" description="N-linked (GlcNAc...) asparagine" evidence="2">
    <location>
        <position position="145"/>
    </location>
</feature>
<feature type="glycosylation site" description="N-linked (GlcNAc...) asparagine" evidence="2">
    <location>
        <position position="151"/>
    </location>
</feature>
<feature type="sequence conflict" description="In Ref. 1; AAC78805." evidence="5" ref="1">
    <original>S</original>
    <variation>Y</variation>
    <location>
        <position position="205"/>
    </location>
</feature>
<feature type="sequence conflict" description="In Ref. 2; BAC39457." evidence="5" ref="2">
    <original>C</original>
    <variation>R</variation>
    <location>
        <position position="223"/>
    </location>
</feature>
<feature type="sequence conflict" description="In Ref. 2; BAC39457." evidence="5" ref="2">
    <original>AN</original>
    <variation>PH</variation>
    <location>
        <begin position="540"/>
        <end position="541"/>
    </location>
</feature>
<feature type="sequence conflict" description="In Ref. 2; BAC39457." evidence="5" ref="2">
    <original>S</original>
    <variation>F</variation>
    <location>
        <position position="579"/>
    </location>
</feature>
<feature type="turn" evidence="9">
    <location>
        <begin position="49"/>
        <end position="51"/>
    </location>
</feature>
<feature type="helix" evidence="9">
    <location>
        <begin position="52"/>
        <end position="76"/>
    </location>
</feature>
<feature type="helix" evidence="9">
    <location>
        <begin position="83"/>
        <end position="104"/>
    </location>
</feature>
<feature type="strand" evidence="9">
    <location>
        <begin position="107"/>
        <end position="109"/>
    </location>
</feature>
<feature type="strand" evidence="10">
    <location>
        <begin position="115"/>
        <end position="117"/>
    </location>
</feature>
<feature type="helix" evidence="9">
    <location>
        <begin position="122"/>
        <end position="128"/>
    </location>
</feature>
<feature type="strand" evidence="9">
    <location>
        <begin position="141"/>
        <end position="143"/>
    </location>
</feature>
<feature type="turn" evidence="10">
    <location>
        <begin position="144"/>
        <end position="146"/>
    </location>
</feature>
<feature type="helix" evidence="9">
    <location>
        <begin position="153"/>
        <end position="179"/>
    </location>
</feature>
<feature type="turn" evidence="9">
    <location>
        <begin position="180"/>
        <end position="182"/>
    </location>
</feature>
<feature type="helix" evidence="9">
    <location>
        <begin position="183"/>
        <end position="189"/>
    </location>
</feature>
<feature type="helix" evidence="9">
    <location>
        <begin position="192"/>
        <end position="203"/>
    </location>
</feature>
<feature type="helix" evidence="9">
    <location>
        <begin position="207"/>
        <end position="214"/>
    </location>
</feature>
<feature type="helix" evidence="9">
    <location>
        <begin position="218"/>
        <end position="232"/>
    </location>
</feature>
<feature type="turn" evidence="9">
    <location>
        <begin position="233"/>
        <end position="235"/>
    </location>
</feature>
<feature type="strand" evidence="9">
    <location>
        <begin position="260"/>
        <end position="262"/>
    </location>
</feature>
<feature type="helix" evidence="9">
    <location>
        <begin position="263"/>
        <end position="281"/>
    </location>
</feature>
<feature type="strand" evidence="10">
    <location>
        <begin position="288"/>
        <end position="290"/>
    </location>
</feature>
<feature type="helix" evidence="10">
    <location>
        <begin position="293"/>
        <end position="295"/>
    </location>
</feature>
<feature type="helix" evidence="10">
    <location>
        <begin position="297"/>
        <end position="300"/>
    </location>
</feature>
<feature type="strand" evidence="9">
    <location>
        <begin position="303"/>
        <end position="307"/>
    </location>
</feature>
<feature type="turn" evidence="9">
    <location>
        <begin position="315"/>
        <end position="318"/>
    </location>
</feature>
<feature type="helix" evidence="9">
    <location>
        <begin position="325"/>
        <end position="352"/>
    </location>
</feature>
<feature type="helix" evidence="9">
    <location>
        <begin position="360"/>
        <end position="380"/>
    </location>
</feature>
<feature type="strand" evidence="10">
    <location>
        <begin position="386"/>
        <end position="388"/>
    </location>
</feature>
<feature type="helix" evidence="9">
    <location>
        <begin position="390"/>
        <end position="398"/>
    </location>
</feature>
<feature type="strand" evidence="9">
    <location>
        <begin position="399"/>
        <end position="401"/>
    </location>
</feature>
<feature type="helix" evidence="9">
    <location>
        <begin position="404"/>
        <end position="417"/>
    </location>
</feature>
<feature type="strand" evidence="9">
    <location>
        <begin position="421"/>
        <end position="423"/>
    </location>
</feature>
<feature type="helix" evidence="9">
    <location>
        <begin position="424"/>
        <end position="427"/>
    </location>
</feature>
<feature type="helix" evidence="9">
    <location>
        <begin position="432"/>
        <end position="451"/>
    </location>
</feature>
<feature type="helix" evidence="9">
    <location>
        <begin position="452"/>
        <end position="454"/>
    </location>
</feature>
<feature type="strand" evidence="9">
    <location>
        <begin position="455"/>
        <end position="457"/>
    </location>
</feature>
<feature type="helix" evidence="9">
    <location>
        <begin position="463"/>
        <end position="484"/>
    </location>
</feature>
<feature type="helix" evidence="9">
    <location>
        <begin position="494"/>
        <end position="505"/>
    </location>
</feature>
<feature type="helix" evidence="9">
    <location>
        <begin position="507"/>
        <end position="510"/>
    </location>
</feature>
<feature type="helix" evidence="9">
    <location>
        <begin position="513"/>
        <end position="521"/>
    </location>
</feature>
<feature type="turn" evidence="9">
    <location>
        <begin position="526"/>
        <end position="530"/>
    </location>
</feature>
<feature type="helix" evidence="10">
    <location>
        <begin position="531"/>
        <end position="533"/>
    </location>
</feature>
<feature type="strand" evidence="9">
    <location>
        <begin position="552"/>
        <end position="554"/>
    </location>
</feature>
<feature type="strand" evidence="9">
    <location>
        <begin position="563"/>
        <end position="565"/>
    </location>
</feature>
<feature type="turn" evidence="9">
    <location>
        <begin position="566"/>
        <end position="568"/>
    </location>
</feature>
<feature type="strand" evidence="9">
    <location>
        <begin position="569"/>
        <end position="572"/>
    </location>
</feature>
<organism>
    <name type="scientific">Mus musculus</name>
    <name type="common">Mouse</name>
    <dbReference type="NCBI Taxonomy" id="10090"/>
    <lineage>
        <taxon>Eukaryota</taxon>
        <taxon>Metazoa</taxon>
        <taxon>Chordata</taxon>
        <taxon>Craniata</taxon>
        <taxon>Vertebrata</taxon>
        <taxon>Euteleostomi</taxon>
        <taxon>Mammalia</taxon>
        <taxon>Eutheria</taxon>
        <taxon>Euarchontoglires</taxon>
        <taxon>Glires</taxon>
        <taxon>Rodentia</taxon>
        <taxon>Myomorpha</taxon>
        <taxon>Muroidea</taxon>
        <taxon>Muridae</taxon>
        <taxon>Murinae</taxon>
        <taxon>Mus</taxon>
        <taxon>Mus</taxon>
    </lineage>
</organism>
<name>S23A1_MOUSE</name>
<keyword id="KW-0002">3D-structure</keyword>
<keyword id="KW-1003">Cell membrane</keyword>
<keyword id="KW-0325">Glycoprotein</keyword>
<keyword id="KW-0406">Ion transport</keyword>
<keyword id="KW-0472">Membrane</keyword>
<keyword id="KW-0597">Phosphoprotein</keyword>
<keyword id="KW-1185">Reference proteome</keyword>
<keyword id="KW-0915">Sodium</keyword>
<keyword id="KW-0739">Sodium transport</keyword>
<keyword id="KW-0769">Symport</keyword>
<keyword id="KW-0812">Transmembrane</keyword>
<keyword id="KW-1133">Transmembrane helix</keyword>
<keyword id="KW-0813">Transport</keyword>